<organism>
    <name type="scientific">Homo sapiens</name>
    <name type="common">Human</name>
    <dbReference type="NCBI Taxonomy" id="9606"/>
    <lineage>
        <taxon>Eukaryota</taxon>
        <taxon>Metazoa</taxon>
        <taxon>Chordata</taxon>
        <taxon>Craniata</taxon>
        <taxon>Vertebrata</taxon>
        <taxon>Euteleostomi</taxon>
        <taxon>Mammalia</taxon>
        <taxon>Eutheria</taxon>
        <taxon>Euarchontoglires</taxon>
        <taxon>Primates</taxon>
        <taxon>Haplorrhini</taxon>
        <taxon>Catarrhini</taxon>
        <taxon>Hominidae</taxon>
        <taxon>Homo</taxon>
    </lineage>
</organism>
<gene>
    <name type="primary">NDUFB1</name>
</gene>
<proteinExistence type="evidence at protein level"/>
<reference key="1">
    <citation type="journal article" date="1998" name="Proc. Natl. Acad. Sci. U.S.A.">
        <title>Identification of genes expressed in human CD34(+) hematopoietic stem/progenitor cells by expressed sequence tags and efficient full-length cDNA cloning.</title>
        <authorList>
            <person name="Mao M."/>
            <person name="Fu G."/>
            <person name="Wu J.-S."/>
            <person name="Zhang Q.-H."/>
            <person name="Zhou J."/>
            <person name="Kan L.-X."/>
            <person name="Huang Q.-H."/>
            <person name="He K.-L."/>
            <person name="Gu B.-W."/>
            <person name="Han Z.-G."/>
            <person name="Shen Y."/>
            <person name="Gu J."/>
            <person name="Yu Y.-P."/>
            <person name="Xu S.-H."/>
            <person name="Wang Y.-X."/>
            <person name="Chen S.-J."/>
            <person name="Chen Z."/>
        </authorList>
    </citation>
    <scope>NUCLEOTIDE SEQUENCE [LARGE SCALE MRNA] (ISOFORM 1)</scope>
    <source>
        <tissue>Umbilical cord blood</tissue>
    </source>
</reference>
<reference key="2">
    <citation type="journal article" date="2004" name="Nat. Genet.">
        <title>Complete sequencing and characterization of 21,243 full-length human cDNAs.</title>
        <authorList>
            <person name="Ota T."/>
            <person name="Suzuki Y."/>
            <person name="Nishikawa T."/>
            <person name="Otsuki T."/>
            <person name="Sugiyama T."/>
            <person name="Irie R."/>
            <person name="Wakamatsu A."/>
            <person name="Hayashi K."/>
            <person name="Sato H."/>
            <person name="Nagai K."/>
            <person name="Kimura K."/>
            <person name="Makita H."/>
            <person name="Sekine M."/>
            <person name="Obayashi M."/>
            <person name="Nishi T."/>
            <person name="Shibahara T."/>
            <person name="Tanaka T."/>
            <person name="Ishii S."/>
            <person name="Yamamoto J."/>
            <person name="Saito K."/>
            <person name="Kawai Y."/>
            <person name="Isono Y."/>
            <person name="Nakamura Y."/>
            <person name="Nagahari K."/>
            <person name="Murakami K."/>
            <person name="Yasuda T."/>
            <person name="Iwayanagi T."/>
            <person name="Wagatsuma M."/>
            <person name="Shiratori A."/>
            <person name="Sudo H."/>
            <person name="Hosoiri T."/>
            <person name="Kaku Y."/>
            <person name="Kodaira H."/>
            <person name="Kondo H."/>
            <person name="Sugawara M."/>
            <person name="Takahashi M."/>
            <person name="Kanda K."/>
            <person name="Yokoi T."/>
            <person name="Furuya T."/>
            <person name="Kikkawa E."/>
            <person name="Omura Y."/>
            <person name="Abe K."/>
            <person name="Kamihara K."/>
            <person name="Katsuta N."/>
            <person name="Sato K."/>
            <person name="Tanikawa M."/>
            <person name="Yamazaki M."/>
            <person name="Ninomiya K."/>
            <person name="Ishibashi T."/>
            <person name="Yamashita H."/>
            <person name="Murakawa K."/>
            <person name="Fujimori K."/>
            <person name="Tanai H."/>
            <person name="Kimata M."/>
            <person name="Watanabe M."/>
            <person name="Hiraoka S."/>
            <person name="Chiba Y."/>
            <person name="Ishida S."/>
            <person name="Ono Y."/>
            <person name="Takiguchi S."/>
            <person name="Watanabe S."/>
            <person name="Yosida M."/>
            <person name="Hotuta T."/>
            <person name="Kusano J."/>
            <person name="Kanehori K."/>
            <person name="Takahashi-Fujii A."/>
            <person name="Hara H."/>
            <person name="Tanase T.-O."/>
            <person name="Nomura Y."/>
            <person name="Togiya S."/>
            <person name="Komai F."/>
            <person name="Hara R."/>
            <person name="Takeuchi K."/>
            <person name="Arita M."/>
            <person name="Imose N."/>
            <person name="Musashino K."/>
            <person name="Yuuki H."/>
            <person name="Oshima A."/>
            <person name="Sasaki N."/>
            <person name="Aotsuka S."/>
            <person name="Yoshikawa Y."/>
            <person name="Matsunawa H."/>
            <person name="Ichihara T."/>
            <person name="Shiohata N."/>
            <person name="Sano S."/>
            <person name="Moriya S."/>
            <person name="Momiyama H."/>
            <person name="Satoh N."/>
            <person name="Takami S."/>
            <person name="Terashima Y."/>
            <person name="Suzuki O."/>
            <person name="Nakagawa S."/>
            <person name="Senoh A."/>
            <person name="Mizoguchi H."/>
            <person name="Goto Y."/>
            <person name="Shimizu F."/>
            <person name="Wakebe H."/>
            <person name="Hishigaki H."/>
            <person name="Watanabe T."/>
            <person name="Sugiyama A."/>
            <person name="Takemoto M."/>
            <person name="Kawakami B."/>
            <person name="Yamazaki M."/>
            <person name="Watanabe K."/>
            <person name="Kumagai A."/>
            <person name="Itakura S."/>
            <person name="Fukuzumi Y."/>
            <person name="Fujimori Y."/>
            <person name="Komiyama M."/>
            <person name="Tashiro H."/>
            <person name="Tanigami A."/>
            <person name="Fujiwara T."/>
            <person name="Ono T."/>
            <person name="Yamada K."/>
            <person name="Fujii Y."/>
            <person name="Ozaki K."/>
            <person name="Hirao M."/>
            <person name="Ohmori Y."/>
            <person name="Kawabata A."/>
            <person name="Hikiji T."/>
            <person name="Kobatake N."/>
            <person name="Inagaki H."/>
            <person name="Ikema Y."/>
            <person name="Okamoto S."/>
            <person name="Okitani R."/>
            <person name="Kawakami T."/>
            <person name="Noguchi S."/>
            <person name="Itoh T."/>
            <person name="Shigeta K."/>
            <person name="Senba T."/>
            <person name="Matsumura K."/>
            <person name="Nakajima Y."/>
            <person name="Mizuno T."/>
            <person name="Morinaga M."/>
            <person name="Sasaki M."/>
            <person name="Togashi T."/>
            <person name="Oyama M."/>
            <person name="Hata H."/>
            <person name="Watanabe M."/>
            <person name="Komatsu T."/>
            <person name="Mizushima-Sugano J."/>
            <person name="Satoh T."/>
            <person name="Shirai Y."/>
            <person name="Takahashi Y."/>
            <person name="Nakagawa K."/>
            <person name="Okumura K."/>
            <person name="Nagase T."/>
            <person name="Nomura N."/>
            <person name="Kikuchi H."/>
            <person name="Masuho Y."/>
            <person name="Yamashita R."/>
            <person name="Nakai K."/>
            <person name="Yada T."/>
            <person name="Nakamura Y."/>
            <person name="Ohara O."/>
            <person name="Isogai T."/>
            <person name="Sugano S."/>
        </authorList>
    </citation>
    <scope>NUCLEOTIDE SEQUENCE [LARGE SCALE MRNA] (ISOFORM 2)</scope>
    <source>
        <tissue>Cerebellum</tissue>
    </source>
</reference>
<reference key="3">
    <citation type="journal article" date="2003" name="Nature">
        <title>The DNA sequence and analysis of human chromosome 14.</title>
        <authorList>
            <person name="Heilig R."/>
            <person name="Eckenberg R."/>
            <person name="Petit J.-L."/>
            <person name="Fonknechten N."/>
            <person name="Da Silva C."/>
            <person name="Cattolico L."/>
            <person name="Levy M."/>
            <person name="Barbe V."/>
            <person name="De Berardinis V."/>
            <person name="Ureta-Vidal A."/>
            <person name="Pelletier E."/>
            <person name="Vico V."/>
            <person name="Anthouard V."/>
            <person name="Rowen L."/>
            <person name="Madan A."/>
            <person name="Qin S."/>
            <person name="Sun H."/>
            <person name="Du H."/>
            <person name="Pepin K."/>
            <person name="Artiguenave F."/>
            <person name="Robert C."/>
            <person name="Cruaud C."/>
            <person name="Bruels T."/>
            <person name="Jaillon O."/>
            <person name="Friedlander L."/>
            <person name="Samson G."/>
            <person name="Brottier P."/>
            <person name="Cure S."/>
            <person name="Segurens B."/>
            <person name="Aniere F."/>
            <person name="Samain S."/>
            <person name="Crespeau H."/>
            <person name="Abbasi N."/>
            <person name="Aiach N."/>
            <person name="Boscus D."/>
            <person name="Dickhoff R."/>
            <person name="Dors M."/>
            <person name="Dubois I."/>
            <person name="Friedman C."/>
            <person name="Gouyvenoux M."/>
            <person name="James R."/>
            <person name="Madan A."/>
            <person name="Mairey-Estrada B."/>
            <person name="Mangenot S."/>
            <person name="Martins N."/>
            <person name="Menard M."/>
            <person name="Oztas S."/>
            <person name="Ratcliffe A."/>
            <person name="Shaffer T."/>
            <person name="Trask B."/>
            <person name="Vacherie B."/>
            <person name="Bellemere C."/>
            <person name="Belser C."/>
            <person name="Besnard-Gonnet M."/>
            <person name="Bartol-Mavel D."/>
            <person name="Boutard M."/>
            <person name="Briez-Silla S."/>
            <person name="Combette S."/>
            <person name="Dufosse-Laurent V."/>
            <person name="Ferron C."/>
            <person name="Lechaplais C."/>
            <person name="Louesse C."/>
            <person name="Muselet D."/>
            <person name="Magdelenat G."/>
            <person name="Pateau E."/>
            <person name="Petit E."/>
            <person name="Sirvain-Trukniewicz P."/>
            <person name="Trybou A."/>
            <person name="Vega-Czarny N."/>
            <person name="Bataille E."/>
            <person name="Bluet E."/>
            <person name="Bordelais I."/>
            <person name="Dubois M."/>
            <person name="Dumont C."/>
            <person name="Guerin T."/>
            <person name="Haffray S."/>
            <person name="Hammadi R."/>
            <person name="Muanga J."/>
            <person name="Pellouin V."/>
            <person name="Robert D."/>
            <person name="Wunderle E."/>
            <person name="Gauguet G."/>
            <person name="Roy A."/>
            <person name="Sainte-Marthe L."/>
            <person name="Verdier J."/>
            <person name="Verdier-Discala C."/>
            <person name="Hillier L.W."/>
            <person name="Fulton L."/>
            <person name="McPherson J."/>
            <person name="Matsuda F."/>
            <person name="Wilson R."/>
            <person name="Scarpelli C."/>
            <person name="Gyapay G."/>
            <person name="Wincker P."/>
            <person name="Saurin W."/>
            <person name="Quetier F."/>
            <person name="Waterston R."/>
            <person name="Hood L."/>
            <person name="Weissenbach J."/>
        </authorList>
    </citation>
    <scope>NUCLEOTIDE SEQUENCE [LARGE SCALE GENOMIC DNA]</scope>
</reference>
<reference key="4">
    <citation type="submission" date="2005-07" db="EMBL/GenBank/DDBJ databases">
        <authorList>
            <person name="Mural R.J."/>
            <person name="Istrail S."/>
            <person name="Sutton G.G."/>
            <person name="Florea L."/>
            <person name="Halpern A.L."/>
            <person name="Mobarry C.M."/>
            <person name="Lippert R."/>
            <person name="Walenz B."/>
            <person name="Shatkay H."/>
            <person name="Dew I."/>
            <person name="Miller J.R."/>
            <person name="Flanigan M.J."/>
            <person name="Edwards N.J."/>
            <person name="Bolanos R."/>
            <person name="Fasulo D."/>
            <person name="Halldorsson B.V."/>
            <person name="Hannenhalli S."/>
            <person name="Turner R."/>
            <person name="Yooseph S."/>
            <person name="Lu F."/>
            <person name="Nusskern D.R."/>
            <person name="Shue B.C."/>
            <person name="Zheng X.H."/>
            <person name="Zhong F."/>
            <person name="Delcher A.L."/>
            <person name="Huson D.H."/>
            <person name="Kravitz S.A."/>
            <person name="Mouchard L."/>
            <person name="Reinert K."/>
            <person name="Remington K.A."/>
            <person name="Clark A.G."/>
            <person name="Waterman M.S."/>
            <person name="Eichler E.E."/>
            <person name="Adams M.D."/>
            <person name="Hunkapiller M.W."/>
            <person name="Myers E.W."/>
            <person name="Venter J.C."/>
        </authorList>
    </citation>
    <scope>NUCLEOTIDE SEQUENCE [LARGE SCALE GENOMIC DNA]</scope>
</reference>
<reference key="5">
    <citation type="journal article" date="2004" name="Genome Res.">
        <title>The status, quality, and expansion of the NIH full-length cDNA project: the Mammalian Gene Collection (MGC).</title>
        <authorList>
            <consortium name="The MGC Project Team"/>
        </authorList>
    </citation>
    <scope>NUCLEOTIDE SEQUENCE [LARGE SCALE MRNA] (ISOFORM 2)</scope>
    <source>
        <tissue>Pancreas</tissue>
    </source>
</reference>
<reference key="6">
    <citation type="submission" date="1998-02" db="EMBL/GenBank/DDBJ databases">
        <title>MNLL subunit of NADH-ubiquinone oxidoreductase.</title>
        <authorList>
            <person name="Triepels R.H."/>
            <person name="Smeets R.J.P."/>
            <person name="Loeffen J.L.C.M."/>
            <person name="Ruitenbeek W."/>
            <person name="Smeitink J.A.M."/>
            <person name="van den Heuvel L."/>
        </authorList>
    </citation>
    <scope>PARTIAL NUCLEOTIDE SEQUENCE [MRNA] (ISOFORM 2)</scope>
</reference>
<reference key="7">
    <citation type="journal article" date="2003" name="J. Biol. Chem.">
        <title>The subunit composition of the human NADH dehydrogenase obtained by rapid one-step immunopurification.</title>
        <authorList>
            <person name="Murray J."/>
            <person name="Zhang B."/>
            <person name="Taylor S.W."/>
            <person name="Oglesbee D."/>
            <person name="Fahy E."/>
            <person name="Marusich M.F."/>
            <person name="Ghosh S.S."/>
            <person name="Capaldi R.A."/>
        </authorList>
    </citation>
    <scope>IDENTIFICATION IN THE NADH-UBIQUINONE OXIDOREDUCTASE COMPLEX</scope>
    <scope>IDENTIFICATION BY MASS SPECTROMETRY</scope>
    <scope>SUBCELLULAR LOCATION</scope>
</reference>
<reference key="8">
    <citation type="journal article" date="2011" name="BMC Syst. Biol.">
        <title>Initial characterization of the human central proteome.</title>
        <authorList>
            <person name="Burkard T.R."/>
            <person name="Planyavsky M."/>
            <person name="Kaupe I."/>
            <person name="Breitwieser F.P."/>
            <person name="Buerckstuemmer T."/>
            <person name="Bennett K.L."/>
            <person name="Superti-Furga G."/>
            <person name="Colinge J."/>
        </authorList>
    </citation>
    <scope>IDENTIFICATION BY MASS SPECTROMETRY [LARGE SCALE ANALYSIS]</scope>
</reference>
<reference key="9">
    <citation type="journal article" date="2012" name="Proc. Natl. Acad. Sci. U.S.A.">
        <title>N-terminal acetylome analyses and functional insights of the N-terminal acetyltransferase NatB.</title>
        <authorList>
            <person name="Van Damme P."/>
            <person name="Lasa M."/>
            <person name="Polevoda B."/>
            <person name="Gazquez C."/>
            <person name="Elosegui-Artola A."/>
            <person name="Kim D.S."/>
            <person name="De Juan-Pardo E."/>
            <person name="Demeyer K."/>
            <person name="Hole K."/>
            <person name="Larrea E."/>
            <person name="Timmerman E."/>
            <person name="Prieto J."/>
            <person name="Arnesen T."/>
            <person name="Sherman F."/>
            <person name="Gevaert K."/>
            <person name="Aldabe R."/>
        </authorList>
    </citation>
    <scope>IDENTIFICATION BY MASS SPECTROMETRY [LARGE SCALE ANALYSIS]</scope>
</reference>
<reference key="10">
    <citation type="journal article" date="2015" name="Proteomics">
        <title>N-terminome analysis of the human mitochondrial proteome.</title>
        <authorList>
            <person name="Vaca Jacome A.S."/>
            <person name="Rabilloud T."/>
            <person name="Schaeffer-Reiss C."/>
            <person name="Rompais M."/>
            <person name="Ayoub D."/>
            <person name="Lane L."/>
            <person name="Bairoch A."/>
            <person name="Van Dorsselaer A."/>
            <person name="Carapito C."/>
        </authorList>
    </citation>
    <scope>CLEAVAGE OF INITIATOR METHIONINE [LARGE SCALE ANALYSIS]</scope>
    <scope>IDENTIFICATION BY MASS SPECTROMETRY [LARGE SCALE ANALYSIS]</scope>
</reference>
<reference key="11">
    <citation type="journal article" date="2016" name="Nature">
        <title>Accessory subunits are integral for assembly and function of human mitochondrial complex I.</title>
        <authorList>
            <person name="Stroud D.A."/>
            <person name="Surgenor E.E."/>
            <person name="Formosa L.E."/>
            <person name="Reljic B."/>
            <person name="Frazier A.E."/>
            <person name="Dibley M.G."/>
            <person name="Osellame L.D."/>
            <person name="Stait T."/>
            <person name="Beilharz T.H."/>
            <person name="Thorburn D.R."/>
            <person name="Salim A."/>
            <person name="Ryan M.T."/>
        </authorList>
    </citation>
    <scope>FUNCTION</scope>
    <scope>IDENTIFICATION IN THE NADH-UBIQUINONE OXIDOREDUCTASE COMPLEX</scope>
</reference>
<dbReference type="EMBL" id="AF054181">
    <property type="protein sequence ID" value="AAC39914.1"/>
    <property type="molecule type" value="mRNA"/>
</dbReference>
<dbReference type="EMBL" id="AK316557">
    <property type="protein sequence ID" value="BAG48175.1"/>
    <property type="molecule type" value="Transcribed_RNA"/>
</dbReference>
<dbReference type="EMBL" id="AL121773">
    <property type="status" value="NOT_ANNOTATED_CDS"/>
    <property type="molecule type" value="Genomic_DNA"/>
</dbReference>
<dbReference type="EMBL" id="CH471061">
    <property type="protein sequence ID" value="EAW81479.1"/>
    <property type="molecule type" value="Genomic_DNA"/>
</dbReference>
<dbReference type="EMBL" id="BC009691">
    <property type="protein sequence ID" value="AAH09691.2"/>
    <property type="molecule type" value="mRNA"/>
</dbReference>
<dbReference type="EMBL" id="BC126232">
    <property type="protein sequence ID" value="AAI26233.1"/>
    <property type="molecule type" value="mRNA"/>
</dbReference>
<dbReference type="EMBL" id="BC126234">
    <property type="protein sequence ID" value="AAI26235.1"/>
    <property type="molecule type" value="mRNA"/>
</dbReference>
<dbReference type="EMBL" id="AF050638">
    <property type="protein sequence ID" value="AAD42054.1"/>
    <property type="status" value="ALT_INIT"/>
    <property type="molecule type" value="mRNA"/>
</dbReference>
<dbReference type="CCDS" id="CCDS9901.2">
    <molecule id="O75438-1"/>
</dbReference>
<dbReference type="RefSeq" id="NP_004536.2">
    <molecule id="O75438-1"/>
    <property type="nucleotide sequence ID" value="NM_004545.3"/>
</dbReference>
<dbReference type="RefSeq" id="XP_047287377.1">
    <molecule id="O75438-1"/>
    <property type="nucleotide sequence ID" value="XM_047431421.1"/>
</dbReference>
<dbReference type="PDB" id="5XTC">
    <property type="method" value="EM"/>
    <property type="resolution" value="3.70 A"/>
    <property type="chains" value="n=3-58"/>
</dbReference>
<dbReference type="PDB" id="5XTD">
    <property type="method" value="EM"/>
    <property type="resolution" value="3.70 A"/>
    <property type="chains" value="n=3-58"/>
</dbReference>
<dbReference type="PDB" id="5XTH">
    <property type="method" value="EM"/>
    <property type="resolution" value="3.90 A"/>
    <property type="chains" value="n=3-58"/>
</dbReference>
<dbReference type="PDB" id="5XTI">
    <property type="method" value="EM"/>
    <property type="resolution" value="17.40 A"/>
    <property type="chains" value="Bn/n=3-58"/>
</dbReference>
<dbReference type="PDBsum" id="5XTC"/>
<dbReference type="PDBsum" id="5XTD"/>
<dbReference type="PDBsum" id="5XTH"/>
<dbReference type="PDBsum" id="5XTI"/>
<dbReference type="SMR" id="O75438"/>
<dbReference type="BioGRID" id="110787">
    <property type="interactions" value="88"/>
</dbReference>
<dbReference type="ComplexPortal" id="CPX-577">
    <property type="entry name" value="Mitochondrial respiratory chain complex I"/>
</dbReference>
<dbReference type="CORUM" id="O75438"/>
<dbReference type="FunCoup" id="O75438">
    <property type="interactions" value="619"/>
</dbReference>
<dbReference type="IntAct" id="O75438">
    <property type="interactions" value="31"/>
</dbReference>
<dbReference type="MINT" id="O75438"/>
<dbReference type="STRING" id="9606.ENSP00000483888"/>
<dbReference type="BindingDB" id="O75438"/>
<dbReference type="ChEMBL" id="CHEMBL2363065"/>
<dbReference type="DrugBank" id="DB00157">
    <property type="generic name" value="NADH"/>
</dbReference>
<dbReference type="DrugCentral" id="O75438"/>
<dbReference type="iPTMnet" id="O75438"/>
<dbReference type="PhosphoSitePlus" id="O75438"/>
<dbReference type="SwissPalm" id="O75438"/>
<dbReference type="BioMuta" id="NDUFB1"/>
<dbReference type="jPOST" id="O75438"/>
<dbReference type="MassIVE" id="O75438"/>
<dbReference type="PaxDb" id="9606-ENSP00000330787"/>
<dbReference type="PeptideAtlas" id="O75438"/>
<dbReference type="ProteomicsDB" id="50005">
    <molecule id="O75438-1"/>
</dbReference>
<dbReference type="ProteomicsDB" id="50006">
    <molecule id="O75438-2"/>
</dbReference>
<dbReference type="Pumba" id="O75438"/>
<dbReference type="TopDownProteomics" id="O75438-1">
    <molecule id="O75438-1"/>
</dbReference>
<dbReference type="TopDownProteomics" id="O75438-2">
    <molecule id="O75438-2"/>
</dbReference>
<dbReference type="Antibodypedia" id="26722">
    <property type="antibodies" value="91 antibodies from 24 providers"/>
</dbReference>
<dbReference type="DNASU" id="4707"/>
<dbReference type="Ensembl" id="ENST00000329559.8">
    <molecule id="O75438-1"/>
    <property type="protein sequence ID" value="ENSP00000330787.4"/>
    <property type="gene ID" value="ENSG00000183648.11"/>
</dbReference>
<dbReference type="Ensembl" id="ENST00000553514.5">
    <molecule id="O75438-1"/>
    <property type="protein sequence ID" value="ENSP00000451090.2"/>
    <property type="gene ID" value="ENSG00000183648.11"/>
</dbReference>
<dbReference type="Ensembl" id="ENST00000555441.5">
    <molecule id="O75438-1"/>
    <property type="protein sequence ID" value="ENSP00000450776.1"/>
    <property type="gene ID" value="ENSG00000183648.11"/>
</dbReference>
<dbReference type="Ensembl" id="ENST00000605997.6">
    <molecule id="O75438-1"/>
    <property type="protein sequence ID" value="ENSP00000475170.1"/>
    <property type="gene ID" value="ENSG00000183648.11"/>
</dbReference>
<dbReference type="Ensembl" id="ENST00000617122.1">
    <molecule id="O75438-2"/>
    <property type="protein sequence ID" value="ENSP00000483888.1"/>
    <property type="gene ID" value="ENSG00000183648.11"/>
</dbReference>
<dbReference type="GeneID" id="4707"/>
<dbReference type="KEGG" id="hsa:4707"/>
<dbReference type="MANE-Select" id="ENST00000605997.6">
    <property type="protein sequence ID" value="ENSP00000475170.1"/>
    <property type="RefSeq nucleotide sequence ID" value="NM_004545.4"/>
    <property type="RefSeq protein sequence ID" value="NP_004536.3"/>
</dbReference>
<dbReference type="UCSC" id="uc001yaf.4">
    <molecule id="O75438-1"/>
    <property type="organism name" value="human"/>
</dbReference>
<dbReference type="AGR" id="HGNC:7695"/>
<dbReference type="CTD" id="4707"/>
<dbReference type="DisGeNET" id="4707"/>
<dbReference type="GeneCards" id="NDUFB1"/>
<dbReference type="HGNC" id="HGNC:7695">
    <property type="gene designation" value="NDUFB1"/>
</dbReference>
<dbReference type="HPA" id="ENSG00000183648">
    <property type="expression patterns" value="Low tissue specificity"/>
</dbReference>
<dbReference type="MalaCards" id="NDUFB1"/>
<dbReference type="MIM" id="603837">
    <property type="type" value="gene"/>
</dbReference>
<dbReference type="neXtProt" id="NX_O75438"/>
<dbReference type="OpenTargets" id="ENSG00000183648"/>
<dbReference type="PharmGKB" id="PA31501"/>
<dbReference type="VEuPathDB" id="HostDB:ENSG00000183648"/>
<dbReference type="eggNOG" id="ENOG502S6X0">
    <property type="taxonomic scope" value="Eukaryota"/>
</dbReference>
<dbReference type="GeneTree" id="ENSGT00390000005052"/>
<dbReference type="HOGENOM" id="CLU_208707_0_0_1"/>
<dbReference type="InParanoid" id="O75438"/>
<dbReference type="OMA" id="HWVHTLV"/>
<dbReference type="OrthoDB" id="9923602at2759"/>
<dbReference type="PAN-GO" id="O75438">
    <property type="GO annotations" value="1 GO annotation based on evolutionary models"/>
</dbReference>
<dbReference type="PhylomeDB" id="O75438"/>
<dbReference type="TreeFam" id="TF324446"/>
<dbReference type="BioCyc" id="MetaCyc:HS09306-MONOMER"/>
<dbReference type="PathwayCommons" id="O75438"/>
<dbReference type="Reactome" id="R-HSA-611105">
    <property type="pathway name" value="Respiratory electron transport"/>
</dbReference>
<dbReference type="Reactome" id="R-HSA-6799198">
    <property type="pathway name" value="Complex I biogenesis"/>
</dbReference>
<dbReference type="SignaLink" id="O75438"/>
<dbReference type="SIGNOR" id="O75438"/>
<dbReference type="BioGRID-ORCS" id="4707">
    <property type="hits" value="96 hits in 1158 CRISPR screens"/>
</dbReference>
<dbReference type="ChiTaRS" id="NDUFB1">
    <property type="organism name" value="human"/>
</dbReference>
<dbReference type="GeneWiki" id="NDUFB1"/>
<dbReference type="GenomeRNAi" id="4707"/>
<dbReference type="Pharos" id="O75438">
    <property type="development level" value="Tclin"/>
</dbReference>
<dbReference type="PRO" id="PR:O75438"/>
<dbReference type="Proteomes" id="UP000005640">
    <property type="component" value="Chromosome 14"/>
</dbReference>
<dbReference type="RNAct" id="O75438">
    <property type="molecule type" value="protein"/>
</dbReference>
<dbReference type="Bgee" id="ENSG00000183648">
    <property type="expression patterns" value="Expressed in heart left ventricle and 201 other cell types or tissues"/>
</dbReference>
<dbReference type="ExpressionAtlas" id="O75438">
    <property type="expression patterns" value="baseline and differential"/>
</dbReference>
<dbReference type="GO" id="GO:0005743">
    <property type="term" value="C:mitochondrial inner membrane"/>
    <property type="evidence" value="ECO:0000314"/>
    <property type="project" value="ComplexPortal"/>
</dbReference>
<dbReference type="GO" id="GO:0005739">
    <property type="term" value="C:mitochondrion"/>
    <property type="evidence" value="ECO:0000314"/>
    <property type="project" value="HPA"/>
</dbReference>
<dbReference type="GO" id="GO:0016607">
    <property type="term" value="C:nuclear speck"/>
    <property type="evidence" value="ECO:0000314"/>
    <property type="project" value="HPA"/>
</dbReference>
<dbReference type="GO" id="GO:0045271">
    <property type="term" value="C:respiratory chain complex I"/>
    <property type="evidence" value="ECO:0000314"/>
    <property type="project" value="UniProtKB"/>
</dbReference>
<dbReference type="GO" id="GO:0008137">
    <property type="term" value="F:NADH dehydrogenase (ubiquinone) activity"/>
    <property type="evidence" value="ECO:0000304"/>
    <property type="project" value="ProtInc"/>
</dbReference>
<dbReference type="GO" id="GO:0009060">
    <property type="term" value="P:aerobic respiration"/>
    <property type="evidence" value="ECO:0000303"/>
    <property type="project" value="ComplexPortal"/>
</dbReference>
<dbReference type="GO" id="GO:0006120">
    <property type="term" value="P:mitochondrial electron transport, NADH to ubiquinone"/>
    <property type="evidence" value="ECO:0000303"/>
    <property type="project" value="UniProtKB"/>
</dbReference>
<dbReference type="GO" id="GO:0042776">
    <property type="term" value="P:proton motive force-driven mitochondrial ATP synthesis"/>
    <property type="evidence" value="ECO:0000303"/>
    <property type="project" value="ComplexPortal"/>
</dbReference>
<dbReference type="InterPro" id="IPR012575">
    <property type="entry name" value="NDUB1"/>
</dbReference>
<dbReference type="PANTHER" id="PTHR15222">
    <property type="entry name" value="NADH DEHYDROGENASE [UBIQUINONE] 1 BETA SUBCOMPLEX SUBUNIT 1"/>
    <property type="match status" value="1"/>
</dbReference>
<dbReference type="PANTHER" id="PTHR15222:SF2">
    <property type="entry name" value="NADH DEHYDROGENASE [UBIQUINONE] 1 BETA SUBCOMPLEX SUBUNIT 1"/>
    <property type="match status" value="1"/>
</dbReference>
<dbReference type="Pfam" id="PF08040">
    <property type="entry name" value="NADH_oxidored"/>
    <property type="match status" value="1"/>
</dbReference>
<feature type="initiator methionine" description="Removed" evidence="8">
    <location>
        <position position="1"/>
    </location>
</feature>
<feature type="chain" id="PRO_0000118827" description="NADH dehydrogenase [ubiquinone] 1 beta subcomplex subunit 1">
    <location>
        <begin position="2"/>
        <end position="58"/>
    </location>
</feature>
<feature type="transmembrane region" description="Helical" evidence="1">
    <location>
        <begin position="11"/>
        <end position="27"/>
    </location>
</feature>
<feature type="splice variant" id="VSP_037859" description="In isoform 2." evidence="4 5">
    <original>M</original>
    <variation>MICWRHPSAPCGRGEWQVPRSQLPLARVEFPVALGLGVAVGAEAAAIM</variation>
    <location>
        <position position="1"/>
    </location>
</feature>
<name>NDUB1_HUMAN</name>
<protein>
    <recommendedName>
        <fullName>NADH dehydrogenase [ubiquinone] 1 beta subcomplex subunit 1</fullName>
    </recommendedName>
    <alternativeName>
        <fullName>Complex I-MNLL</fullName>
        <shortName>CI-MNLL</shortName>
    </alternativeName>
    <alternativeName>
        <fullName>NADH-ubiquinone oxidoreductase MNLL subunit</fullName>
    </alternativeName>
</protein>
<evidence type="ECO:0000255" key="1"/>
<evidence type="ECO:0000269" key="2">
    <source>
    </source>
</evidence>
<evidence type="ECO:0000269" key="3">
    <source>
    </source>
</evidence>
<evidence type="ECO:0000303" key="4">
    <source>
    </source>
</evidence>
<evidence type="ECO:0000303" key="5">
    <source>
    </source>
</evidence>
<evidence type="ECO:0000305" key="6"/>
<evidence type="ECO:0000305" key="7">
    <source>
    </source>
</evidence>
<evidence type="ECO:0007744" key="8">
    <source>
    </source>
</evidence>
<comment type="function">
    <text evidence="3">Accessory subunit of the mitochondrial membrane respiratory chain NADH dehydrogenase (Complex I) that is believed not to be involved in catalysis. Complex I functions in the transfer of electrons from NADH to the respiratory chain. The immediate electron acceptor for the enzyme is believed to be ubiquinone.</text>
</comment>
<comment type="subunit">
    <text evidence="2 3">Complex I is composed of 45 different subunits.</text>
</comment>
<comment type="subcellular location">
    <subcellularLocation>
        <location evidence="7">Mitochondrion inner membrane</location>
        <topology evidence="1">Single-pass membrane protein</topology>
        <orientation evidence="6">Matrix side</orientation>
    </subcellularLocation>
</comment>
<comment type="alternative products">
    <event type="alternative splicing"/>
    <isoform>
        <id>O75438-1</id>
        <name>1</name>
        <sequence type="displayed"/>
    </isoform>
    <isoform>
        <id>O75438-2</id>
        <name>2</name>
        <sequence type="described" ref="VSP_037859"/>
    </isoform>
</comment>
<comment type="similarity">
    <text evidence="6">Belongs to the complex I NDUFB1 subunit family.</text>
</comment>
<comment type="sequence caution" evidence="6">
    <conflict type="erroneous initiation">
        <sequence resource="EMBL-CDS" id="AAD42054"/>
    </conflict>
</comment>
<sequence length="58" mass="6961">MVNLLQIVRDHWVHVLVPMGFVIGCYLDRKSDERLTAFRNKSMLFKRELQPSEEVTWK</sequence>
<accession>O75438</accession>
<accession>A0AV68</accession>
<keyword id="KW-0002">3D-structure</keyword>
<keyword id="KW-0025">Alternative splicing</keyword>
<keyword id="KW-0249">Electron transport</keyword>
<keyword id="KW-0472">Membrane</keyword>
<keyword id="KW-0496">Mitochondrion</keyword>
<keyword id="KW-0999">Mitochondrion inner membrane</keyword>
<keyword id="KW-1267">Proteomics identification</keyword>
<keyword id="KW-1185">Reference proteome</keyword>
<keyword id="KW-0679">Respiratory chain</keyword>
<keyword id="KW-0812">Transmembrane</keyword>
<keyword id="KW-1133">Transmembrane helix</keyword>
<keyword id="KW-0813">Transport</keyword>